<accession>Q2NW11</accession>
<gene>
    <name evidence="1" type="primary">rsmC</name>
    <name type="ordered locus">SG0389</name>
</gene>
<keyword id="KW-0963">Cytoplasm</keyword>
<keyword id="KW-0489">Methyltransferase</keyword>
<keyword id="KW-0698">rRNA processing</keyword>
<keyword id="KW-0949">S-adenosyl-L-methionine</keyword>
<keyword id="KW-0808">Transferase</keyword>
<proteinExistence type="inferred from homology"/>
<sequence>MSALIPASEVILRHQDTFSDKQVVIAGDVQDLLPARLEARSVKVHTAWFHHRQTLARALGEQAVQFGLVADAALGGGCDTLIYYWPKNKPEALFQLTNLLSLLPLGCDVFVVGENRSGVRSAEPMLAAWCPLAKIDSARRCGLYHGELVQQPRFDAEAFWQSYQLEDVVIKTLPGVFSRDGLDNGSQLLLSTFDRPFQGHVADIGCGTGVLSAVLAKGAAGVQLTLSDAHAPALAASRATLAVNGLQGEVLAGDVYSAISGRFDMIISNPPFHDGMQTNLKAAETLIRGALNHLRIGGELRIVANAFLPYPDLLDAVFGNHQVLVQNGRFKVYQAIHQVKRSRDKGPKRR</sequence>
<evidence type="ECO:0000255" key="1">
    <source>
        <dbReference type="HAMAP-Rule" id="MF_01862"/>
    </source>
</evidence>
<feature type="chain" id="PRO_0000369790" description="Ribosomal RNA small subunit methyltransferase C">
    <location>
        <begin position="1"/>
        <end position="350"/>
    </location>
</feature>
<organism>
    <name type="scientific">Sodalis glossinidius (strain morsitans)</name>
    <dbReference type="NCBI Taxonomy" id="343509"/>
    <lineage>
        <taxon>Bacteria</taxon>
        <taxon>Pseudomonadati</taxon>
        <taxon>Pseudomonadota</taxon>
        <taxon>Gammaproteobacteria</taxon>
        <taxon>Enterobacterales</taxon>
        <taxon>Bruguierivoracaceae</taxon>
        <taxon>Sodalis</taxon>
    </lineage>
</organism>
<name>RSMC_SODGM</name>
<comment type="function">
    <text evidence="1">Specifically methylates the guanine in position 1207 of 16S rRNA in the 30S particle.</text>
</comment>
<comment type="catalytic activity">
    <reaction evidence="1">
        <text>guanosine(1207) in 16S rRNA + S-adenosyl-L-methionine = N(2)-methylguanosine(1207) in 16S rRNA + S-adenosyl-L-homocysteine + H(+)</text>
        <dbReference type="Rhea" id="RHEA:42736"/>
        <dbReference type="Rhea" id="RHEA-COMP:10213"/>
        <dbReference type="Rhea" id="RHEA-COMP:10214"/>
        <dbReference type="ChEBI" id="CHEBI:15378"/>
        <dbReference type="ChEBI" id="CHEBI:57856"/>
        <dbReference type="ChEBI" id="CHEBI:59789"/>
        <dbReference type="ChEBI" id="CHEBI:74269"/>
        <dbReference type="ChEBI" id="CHEBI:74481"/>
        <dbReference type="EC" id="2.1.1.172"/>
    </reaction>
</comment>
<comment type="subunit">
    <text evidence="1">Monomer.</text>
</comment>
<comment type="subcellular location">
    <subcellularLocation>
        <location evidence="1">Cytoplasm</location>
    </subcellularLocation>
</comment>
<comment type="similarity">
    <text evidence="1">Belongs to the methyltransferase superfamily. RsmC family.</text>
</comment>
<reference key="1">
    <citation type="journal article" date="2006" name="Genome Res.">
        <title>Massive genome erosion and functional adaptations provide insights into the symbiotic lifestyle of Sodalis glossinidius in the tsetse host.</title>
        <authorList>
            <person name="Toh H."/>
            <person name="Weiss B.L."/>
            <person name="Perkin S.A.H."/>
            <person name="Yamashita A."/>
            <person name="Oshima K."/>
            <person name="Hattori M."/>
            <person name="Aksoy S."/>
        </authorList>
    </citation>
    <scope>NUCLEOTIDE SEQUENCE [LARGE SCALE GENOMIC DNA]</scope>
    <source>
        <strain>morsitans</strain>
    </source>
</reference>
<dbReference type="EC" id="2.1.1.172" evidence="1"/>
<dbReference type="EMBL" id="AP008232">
    <property type="protein sequence ID" value="BAE73664.1"/>
    <property type="molecule type" value="Genomic_DNA"/>
</dbReference>
<dbReference type="RefSeq" id="WP_011410252.1">
    <property type="nucleotide sequence ID" value="NC_007712.1"/>
</dbReference>
<dbReference type="SMR" id="Q2NW11"/>
<dbReference type="STRING" id="343509.SG0389"/>
<dbReference type="KEGG" id="sgl:SG0389"/>
<dbReference type="eggNOG" id="COG2813">
    <property type="taxonomic scope" value="Bacteria"/>
</dbReference>
<dbReference type="HOGENOM" id="CLU_049581_0_1_6"/>
<dbReference type="OrthoDB" id="9816072at2"/>
<dbReference type="BioCyc" id="SGLO343509:SGP1_RS03635-MONOMER"/>
<dbReference type="Proteomes" id="UP000001932">
    <property type="component" value="Chromosome"/>
</dbReference>
<dbReference type="GO" id="GO:0005737">
    <property type="term" value="C:cytoplasm"/>
    <property type="evidence" value="ECO:0007669"/>
    <property type="project" value="UniProtKB-SubCell"/>
</dbReference>
<dbReference type="GO" id="GO:0052914">
    <property type="term" value="F:16S rRNA (guanine(1207)-N(2))-methyltransferase activity"/>
    <property type="evidence" value="ECO:0007669"/>
    <property type="project" value="UniProtKB-EC"/>
</dbReference>
<dbReference type="GO" id="GO:0003676">
    <property type="term" value="F:nucleic acid binding"/>
    <property type="evidence" value="ECO:0007669"/>
    <property type="project" value="InterPro"/>
</dbReference>
<dbReference type="CDD" id="cd02440">
    <property type="entry name" value="AdoMet_MTases"/>
    <property type="match status" value="1"/>
</dbReference>
<dbReference type="Gene3D" id="3.40.50.150">
    <property type="entry name" value="Vaccinia Virus protein VP39"/>
    <property type="match status" value="2"/>
</dbReference>
<dbReference type="HAMAP" id="MF_01862">
    <property type="entry name" value="16SrRNA_methyltr_C"/>
    <property type="match status" value="1"/>
</dbReference>
<dbReference type="InterPro" id="IPR002052">
    <property type="entry name" value="DNA_methylase_N6_adenine_CS"/>
</dbReference>
<dbReference type="InterPro" id="IPR013675">
    <property type="entry name" value="Mtase_sm_N"/>
</dbReference>
<dbReference type="InterPro" id="IPR023543">
    <property type="entry name" value="rRNA_ssu_MeTfrase_C"/>
</dbReference>
<dbReference type="InterPro" id="IPR046977">
    <property type="entry name" value="RsmC/RlmG"/>
</dbReference>
<dbReference type="InterPro" id="IPR029063">
    <property type="entry name" value="SAM-dependent_MTases_sf"/>
</dbReference>
<dbReference type="InterPro" id="IPR007848">
    <property type="entry name" value="Small_mtfrase_dom"/>
</dbReference>
<dbReference type="NCBIfam" id="NF007023">
    <property type="entry name" value="PRK09489.1"/>
    <property type="match status" value="1"/>
</dbReference>
<dbReference type="PANTHER" id="PTHR47816">
    <property type="entry name" value="RIBOSOMAL RNA SMALL SUBUNIT METHYLTRANSFERASE C"/>
    <property type="match status" value="1"/>
</dbReference>
<dbReference type="PANTHER" id="PTHR47816:SF4">
    <property type="entry name" value="RIBOSOMAL RNA SMALL SUBUNIT METHYLTRANSFERASE C"/>
    <property type="match status" value="1"/>
</dbReference>
<dbReference type="Pfam" id="PF05175">
    <property type="entry name" value="MTS"/>
    <property type="match status" value="1"/>
</dbReference>
<dbReference type="Pfam" id="PF08468">
    <property type="entry name" value="MTS_N"/>
    <property type="match status" value="1"/>
</dbReference>
<dbReference type="SUPFAM" id="SSF53335">
    <property type="entry name" value="S-adenosyl-L-methionine-dependent methyltransferases"/>
    <property type="match status" value="1"/>
</dbReference>
<protein>
    <recommendedName>
        <fullName evidence="1">Ribosomal RNA small subunit methyltransferase C</fullName>
        <ecNumber evidence="1">2.1.1.172</ecNumber>
    </recommendedName>
    <alternativeName>
        <fullName evidence="1">16S rRNA m2G1207 methyltransferase</fullName>
    </alternativeName>
    <alternativeName>
        <fullName evidence="1">rRNA (guanine-N(2)-)-methyltransferase RsmC</fullName>
    </alternativeName>
</protein>